<feature type="chain" id="PRO_0000321183" description="Aspartate carbamoyltransferase catalytic subunit">
    <location>
        <begin position="1"/>
        <end position="309"/>
    </location>
</feature>
<feature type="binding site" evidence="1">
    <location>
        <position position="57"/>
    </location>
    <ligand>
        <name>carbamoyl phosphate</name>
        <dbReference type="ChEBI" id="CHEBI:58228"/>
    </ligand>
</feature>
<feature type="binding site" evidence="1">
    <location>
        <position position="58"/>
    </location>
    <ligand>
        <name>carbamoyl phosphate</name>
        <dbReference type="ChEBI" id="CHEBI:58228"/>
    </ligand>
</feature>
<feature type="binding site" evidence="1">
    <location>
        <position position="86"/>
    </location>
    <ligand>
        <name>L-aspartate</name>
        <dbReference type="ChEBI" id="CHEBI:29991"/>
    </ligand>
</feature>
<feature type="binding site" evidence="1">
    <location>
        <position position="107"/>
    </location>
    <ligand>
        <name>carbamoyl phosphate</name>
        <dbReference type="ChEBI" id="CHEBI:58228"/>
    </ligand>
</feature>
<feature type="binding site" evidence="1">
    <location>
        <position position="135"/>
    </location>
    <ligand>
        <name>carbamoyl phosphate</name>
        <dbReference type="ChEBI" id="CHEBI:58228"/>
    </ligand>
</feature>
<feature type="binding site" evidence="1">
    <location>
        <position position="138"/>
    </location>
    <ligand>
        <name>carbamoyl phosphate</name>
        <dbReference type="ChEBI" id="CHEBI:58228"/>
    </ligand>
</feature>
<feature type="binding site" evidence="1">
    <location>
        <position position="168"/>
    </location>
    <ligand>
        <name>L-aspartate</name>
        <dbReference type="ChEBI" id="CHEBI:29991"/>
    </ligand>
</feature>
<feature type="binding site" evidence="1">
    <location>
        <position position="228"/>
    </location>
    <ligand>
        <name>L-aspartate</name>
        <dbReference type="ChEBI" id="CHEBI:29991"/>
    </ligand>
</feature>
<feature type="binding site" evidence="1">
    <location>
        <position position="267"/>
    </location>
    <ligand>
        <name>carbamoyl phosphate</name>
        <dbReference type="ChEBI" id="CHEBI:58228"/>
    </ligand>
</feature>
<feature type="binding site" evidence="1">
    <location>
        <position position="268"/>
    </location>
    <ligand>
        <name>carbamoyl phosphate</name>
        <dbReference type="ChEBI" id="CHEBI:58228"/>
    </ligand>
</feature>
<dbReference type="EC" id="2.1.3.2" evidence="1"/>
<dbReference type="EMBL" id="DP000238">
    <property type="protein sequence ID" value="ABK78062.1"/>
    <property type="molecule type" value="Genomic_DNA"/>
</dbReference>
<dbReference type="SMR" id="A0RXJ5"/>
<dbReference type="STRING" id="414004.CENSYa_1440"/>
<dbReference type="EnsemblBacteria" id="ABK78062">
    <property type="protein sequence ID" value="ABK78062"/>
    <property type="gene ID" value="CENSYa_1440"/>
</dbReference>
<dbReference type="KEGG" id="csy:CENSYa_1440"/>
<dbReference type="PATRIC" id="fig|414004.10.peg.1324"/>
<dbReference type="HOGENOM" id="CLU_043846_1_2_2"/>
<dbReference type="UniPathway" id="UPA00070">
    <property type="reaction ID" value="UER00116"/>
</dbReference>
<dbReference type="Proteomes" id="UP000000758">
    <property type="component" value="Chromosome"/>
</dbReference>
<dbReference type="GO" id="GO:0016597">
    <property type="term" value="F:amino acid binding"/>
    <property type="evidence" value="ECO:0007669"/>
    <property type="project" value="InterPro"/>
</dbReference>
<dbReference type="GO" id="GO:0004070">
    <property type="term" value="F:aspartate carbamoyltransferase activity"/>
    <property type="evidence" value="ECO:0007669"/>
    <property type="project" value="UniProtKB-UniRule"/>
</dbReference>
<dbReference type="GO" id="GO:0006207">
    <property type="term" value="P:'de novo' pyrimidine nucleobase biosynthetic process"/>
    <property type="evidence" value="ECO:0007669"/>
    <property type="project" value="InterPro"/>
</dbReference>
<dbReference type="GO" id="GO:0044205">
    <property type="term" value="P:'de novo' UMP biosynthetic process"/>
    <property type="evidence" value="ECO:0007669"/>
    <property type="project" value="UniProtKB-UniRule"/>
</dbReference>
<dbReference type="GO" id="GO:0006520">
    <property type="term" value="P:amino acid metabolic process"/>
    <property type="evidence" value="ECO:0007669"/>
    <property type="project" value="InterPro"/>
</dbReference>
<dbReference type="FunFam" id="3.40.50.1370:FF:000002">
    <property type="entry name" value="Aspartate carbamoyltransferase 2"/>
    <property type="match status" value="1"/>
</dbReference>
<dbReference type="Gene3D" id="3.40.50.1370">
    <property type="entry name" value="Aspartate/ornithine carbamoyltransferase"/>
    <property type="match status" value="2"/>
</dbReference>
<dbReference type="HAMAP" id="MF_00001">
    <property type="entry name" value="Asp_carb_tr"/>
    <property type="match status" value="1"/>
</dbReference>
<dbReference type="InterPro" id="IPR006132">
    <property type="entry name" value="Asp/Orn_carbamoyltranf_P-bd"/>
</dbReference>
<dbReference type="InterPro" id="IPR006130">
    <property type="entry name" value="Asp/Orn_carbamoylTrfase"/>
</dbReference>
<dbReference type="InterPro" id="IPR036901">
    <property type="entry name" value="Asp/Orn_carbamoylTrfase_sf"/>
</dbReference>
<dbReference type="InterPro" id="IPR002082">
    <property type="entry name" value="Asp_carbamoyltransf"/>
</dbReference>
<dbReference type="InterPro" id="IPR006131">
    <property type="entry name" value="Asp_carbamoyltransf_Asp/Orn-bd"/>
</dbReference>
<dbReference type="NCBIfam" id="TIGR00670">
    <property type="entry name" value="asp_carb_tr"/>
    <property type="match status" value="1"/>
</dbReference>
<dbReference type="NCBIfam" id="NF002032">
    <property type="entry name" value="PRK00856.1"/>
    <property type="match status" value="1"/>
</dbReference>
<dbReference type="PANTHER" id="PTHR45753:SF6">
    <property type="entry name" value="ASPARTATE CARBAMOYLTRANSFERASE"/>
    <property type="match status" value="1"/>
</dbReference>
<dbReference type="PANTHER" id="PTHR45753">
    <property type="entry name" value="ORNITHINE CARBAMOYLTRANSFERASE, MITOCHONDRIAL"/>
    <property type="match status" value="1"/>
</dbReference>
<dbReference type="Pfam" id="PF00185">
    <property type="entry name" value="OTCace"/>
    <property type="match status" value="1"/>
</dbReference>
<dbReference type="Pfam" id="PF02729">
    <property type="entry name" value="OTCace_N"/>
    <property type="match status" value="1"/>
</dbReference>
<dbReference type="PRINTS" id="PR00100">
    <property type="entry name" value="AOTCASE"/>
</dbReference>
<dbReference type="PRINTS" id="PR00101">
    <property type="entry name" value="ATCASE"/>
</dbReference>
<dbReference type="SUPFAM" id="SSF53671">
    <property type="entry name" value="Aspartate/ornithine carbamoyltransferase"/>
    <property type="match status" value="1"/>
</dbReference>
<dbReference type="PROSITE" id="PS00097">
    <property type="entry name" value="CARBAMOYLTRANSFERASE"/>
    <property type="match status" value="1"/>
</dbReference>
<gene>
    <name evidence="1" type="primary">pyrB</name>
    <name type="ordered locus">CENSYa_1440</name>
</gene>
<sequence>MAGFYGRDIISVRDLDRQALEEVFRYTEKFVKMTPSERRSVAGGRTLGYLFYEPSTRTRLSFQAAMASAGGTSLGIADVSSSSIQKGESLADTVRMMAMYSDALVLRHPLDGSSRFAAEVSDKPVINAGSGTEEHPTQAIQDLFTIRREKGGIDGLNIGVVGDLKYGRTVYSLLHALGNYDVKVSLISPEPLRIRTDSIYDIRTKLDFAESESLDEYVDELDVVYVTRIQKERFPDEEEYLKVKGSYVIGLDMLRKMKDGAIILHPLPRLDEISGEVDGTDKAKYFVQAEYGVYTRAALLGLVLNEGGF</sequence>
<organism>
    <name type="scientific">Cenarchaeum symbiosum (strain A)</name>
    <dbReference type="NCBI Taxonomy" id="414004"/>
    <lineage>
        <taxon>Archaea</taxon>
        <taxon>Nitrososphaerota</taxon>
        <taxon>Candidatus Cenarchaeales</taxon>
        <taxon>Candidatus Cenarchaeaceae</taxon>
        <taxon>Candidatus Cenarchaeum</taxon>
    </lineage>
</organism>
<name>PYRB_CENSY</name>
<keyword id="KW-0665">Pyrimidine biosynthesis</keyword>
<keyword id="KW-1185">Reference proteome</keyword>
<keyword id="KW-0808">Transferase</keyword>
<reference key="1">
    <citation type="journal article" date="2006" name="Proc. Natl. Acad. Sci. U.S.A.">
        <title>Genomic analysis of the uncultivated marine crenarchaeote Cenarchaeum symbiosum.</title>
        <authorList>
            <person name="Hallam S.J."/>
            <person name="Konstantinidis K.T."/>
            <person name="Putnam N."/>
            <person name="Schleper C."/>
            <person name="Watanabe Y."/>
            <person name="Sugahara J."/>
            <person name="Preston C."/>
            <person name="de la Torre J."/>
            <person name="Richardson P.M."/>
            <person name="DeLong E.F."/>
        </authorList>
    </citation>
    <scope>NUCLEOTIDE SEQUENCE [LARGE SCALE GENOMIC DNA]</scope>
    <source>
        <strain>A</strain>
    </source>
</reference>
<protein>
    <recommendedName>
        <fullName evidence="1">Aspartate carbamoyltransferase catalytic subunit</fullName>
        <ecNumber evidence="1">2.1.3.2</ecNumber>
    </recommendedName>
    <alternativeName>
        <fullName evidence="1">Aspartate transcarbamylase</fullName>
        <shortName evidence="1">ATCase</shortName>
    </alternativeName>
</protein>
<proteinExistence type="inferred from homology"/>
<evidence type="ECO:0000255" key="1">
    <source>
        <dbReference type="HAMAP-Rule" id="MF_00001"/>
    </source>
</evidence>
<comment type="function">
    <text evidence="1">Catalyzes the condensation of carbamoyl phosphate and aspartate to form carbamoyl aspartate and inorganic phosphate, the committed step in the de novo pyrimidine nucleotide biosynthesis pathway.</text>
</comment>
<comment type="catalytic activity">
    <reaction evidence="1">
        <text>carbamoyl phosphate + L-aspartate = N-carbamoyl-L-aspartate + phosphate + H(+)</text>
        <dbReference type="Rhea" id="RHEA:20013"/>
        <dbReference type="ChEBI" id="CHEBI:15378"/>
        <dbReference type="ChEBI" id="CHEBI:29991"/>
        <dbReference type="ChEBI" id="CHEBI:32814"/>
        <dbReference type="ChEBI" id="CHEBI:43474"/>
        <dbReference type="ChEBI" id="CHEBI:58228"/>
        <dbReference type="EC" id="2.1.3.2"/>
    </reaction>
</comment>
<comment type="pathway">
    <text evidence="1">Pyrimidine metabolism; UMP biosynthesis via de novo pathway; (S)-dihydroorotate from bicarbonate: step 2/3.</text>
</comment>
<comment type="subunit">
    <text evidence="1">Heterooligomer of catalytic and regulatory chains.</text>
</comment>
<comment type="similarity">
    <text evidence="1">Belongs to the aspartate/ornithine carbamoyltransferase superfamily. ATCase family.</text>
</comment>
<accession>A0RXJ5</accession>